<feature type="chain" id="PRO_0000055503" description="Unknown protein from spot 154 of 2D-PAGE of etiolated coleoptile">
    <location>
        <begin position="1" status="less than"/>
        <end position="28" status="greater than"/>
    </location>
</feature>
<feature type="non-consecutive residues" evidence="1">
    <location>
        <begin position="15"/>
        <end position="16"/>
    </location>
</feature>
<feature type="non-terminal residue">
    <location>
        <position position="1"/>
    </location>
</feature>
<feature type="non-terminal residue">
    <location>
        <position position="28"/>
    </location>
</feature>
<reference key="1">
    <citation type="journal article" date="1996" name="Theor. Appl. Genet.">
        <title>The maize two dimensional gel protein database: towards an integrated genome analysis program.</title>
        <authorList>
            <person name="Touzet P."/>
            <person name="Riccardi F."/>
            <person name="Morin C."/>
            <person name="Damerval C."/>
            <person name="Huet J.-C."/>
            <person name="Pernollet J.-C."/>
            <person name="Zivy M."/>
            <person name="de Vienne D."/>
        </authorList>
        <dbReference type="AGRICOLA" id="IND20551642"/>
    </citation>
    <scope>PROTEIN SEQUENCE</scope>
    <source>
        <tissue>Coleoptile</tissue>
    </source>
</reference>
<sequence>DHPGVRDGTNIVLXKILPWGDEAYAAGG</sequence>
<dbReference type="MaizeGDB" id="123928"/>
<dbReference type="InParanoid" id="P80611"/>
<dbReference type="Proteomes" id="UP000007305">
    <property type="component" value="Unplaced"/>
</dbReference>
<proteinExistence type="evidence at protein level"/>
<evidence type="ECO:0000305" key="1"/>
<accession>P80611</accession>
<name>UC05_MAIZE</name>
<protein>
    <recommendedName>
        <fullName>Unknown protein from spot 154 of 2D-PAGE of etiolated coleoptile</fullName>
    </recommendedName>
</protein>
<comment type="miscellaneous">
    <text>On the 2D-gel the determined pI of this unknown protein is: 6.8, its MW is: 35.3 kDa.</text>
</comment>
<comment type="caution">
    <text evidence="1">The order of the peptides shown is unknown.</text>
</comment>
<keyword id="KW-0903">Direct protein sequencing</keyword>
<keyword id="KW-1185">Reference proteome</keyword>
<organism>
    <name type="scientific">Zea mays</name>
    <name type="common">Maize</name>
    <dbReference type="NCBI Taxonomy" id="4577"/>
    <lineage>
        <taxon>Eukaryota</taxon>
        <taxon>Viridiplantae</taxon>
        <taxon>Streptophyta</taxon>
        <taxon>Embryophyta</taxon>
        <taxon>Tracheophyta</taxon>
        <taxon>Spermatophyta</taxon>
        <taxon>Magnoliopsida</taxon>
        <taxon>Liliopsida</taxon>
        <taxon>Poales</taxon>
        <taxon>Poaceae</taxon>
        <taxon>PACMAD clade</taxon>
        <taxon>Panicoideae</taxon>
        <taxon>Andropogonodae</taxon>
        <taxon>Andropogoneae</taxon>
        <taxon>Tripsacinae</taxon>
        <taxon>Zea</taxon>
    </lineage>
</organism>